<dbReference type="EMBL" id="AE017224">
    <property type="protein sequence ID" value="AAX75906.1"/>
    <property type="molecule type" value="Genomic_DNA"/>
</dbReference>
<dbReference type="RefSeq" id="WP_002965896.1">
    <property type="nucleotide sequence ID" value="NC_006933.1"/>
</dbReference>
<dbReference type="SMR" id="Q578M8"/>
<dbReference type="EnsemblBacteria" id="AAX75906">
    <property type="protein sequence ID" value="AAX75906"/>
    <property type="gene ID" value="BruAb2_0484"/>
</dbReference>
<dbReference type="KEGG" id="bmb:BruAb2_0484"/>
<dbReference type="HOGENOM" id="CLU_031285_10_1_5"/>
<dbReference type="Proteomes" id="UP000000540">
    <property type="component" value="Chromosome II"/>
</dbReference>
<dbReference type="GO" id="GO:0055052">
    <property type="term" value="C:ATP-binding cassette (ABC) transporter complex, substrate-binding subunit-containing"/>
    <property type="evidence" value="ECO:0007669"/>
    <property type="project" value="TreeGrafter"/>
</dbReference>
<dbReference type="GO" id="GO:0042597">
    <property type="term" value="C:periplasmic space"/>
    <property type="evidence" value="ECO:0007669"/>
    <property type="project" value="UniProtKB-SubCell"/>
</dbReference>
<dbReference type="GO" id="GO:1901982">
    <property type="term" value="F:maltose binding"/>
    <property type="evidence" value="ECO:0007669"/>
    <property type="project" value="TreeGrafter"/>
</dbReference>
<dbReference type="GO" id="GO:0042956">
    <property type="term" value="P:maltodextrin transmembrane transport"/>
    <property type="evidence" value="ECO:0007669"/>
    <property type="project" value="TreeGrafter"/>
</dbReference>
<dbReference type="GO" id="GO:0015768">
    <property type="term" value="P:maltose transport"/>
    <property type="evidence" value="ECO:0007669"/>
    <property type="project" value="TreeGrafter"/>
</dbReference>
<dbReference type="GO" id="GO:0055085">
    <property type="term" value="P:transmembrane transport"/>
    <property type="evidence" value="ECO:0007669"/>
    <property type="project" value="InterPro"/>
</dbReference>
<dbReference type="CDD" id="cd13585">
    <property type="entry name" value="PBP2_TMBP_like"/>
    <property type="match status" value="1"/>
</dbReference>
<dbReference type="Gene3D" id="3.40.190.10">
    <property type="entry name" value="Periplasmic binding protein-like II"/>
    <property type="match status" value="2"/>
</dbReference>
<dbReference type="InterPro" id="IPR006059">
    <property type="entry name" value="SBP"/>
</dbReference>
<dbReference type="InterPro" id="IPR006061">
    <property type="entry name" value="SBP_1_CS"/>
</dbReference>
<dbReference type="PANTHER" id="PTHR30061">
    <property type="entry name" value="MALTOSE-BINDING PERIPLASMIC PROTEIN"/>
    <property type="match status" value="1"/>
</dbReference>
<dbReference type="PANTHER" id="PTHR30061:SF50">
    <property type="entry name" value="MALTOSE_MALTODEXTRIN-BINDING PERIPLASMIC PROTEIN"/>
    <property type="match status" value="1"/>
</dbReference>
<dbReference type="Pfam" id="PF01547">
    <property type="entry name" value="SBP_bac_1"/>
    <property type="match status" value="1"/>
</dbReference>
<dbReference type="SUPFAM" id="SSF53850">
    <property type="entry name" value="Periplasmic binding protein-like II"/>
    <property type="match status" value="1"/>
</dbReference>
<dbReference type="PROSITE" id="PS01037">
    <property type="entry name" value="SBP_BACTERIAL_1"/>
    <property type="match status" value="1"/>
</dbReference>
<accession>Q578M8</accession>
<feature type="signal peptide" evidence="1">
    <location>
        <begin position="1"/>
        <end position="25"/>
    </location>
</feature>
<feature type="chain" id="PRO_0000281197" description="Putative binding protein BruAb2_0484">
    <location>
        <begin position="26"/>
        <end position="411"/>
    </location>
</feature>
<comment type="function">
    <text>Probably part of an ABC transporter complex.</text>
</comment>
<comment type="subunit">
    <text evidence="2">The complex is composed of two ATP-binding proteins (BruAb2_0487), two transmembrane proteins (BruAb2_0483) and a solute-binding protein (BruAb2_0484).</text>
</comment>
<comment type="subcellular location">
    <subcellularLocation>
        <location evidence="2">Periplasm</location>
    </subcellularLocation>
</comment>
<comment type="similarity">
    <text evidence="2">Belongs to the bacterial solute-binding protein 1 family.</text>
</comment>
<keyword id="KW-0574">Periplasm</keyword>
<keyword id="KW-0732">Signal</keyword>
<keyword id="KW-0813">Transport</keyword>
<organism>
    <name type="scientific">Brucella abortus biovar 1 (strain 9-941)</name>
    <dbReference type="NCBI Taxonomy" id="262698"/>
    <lineage>
        <taxon>Bacteria</taxon>
        <taxon>Pseudomonadati</taxon>
        <taxon>Pseudomonadota</taxon>
        <taxon>Alphaproteobacteria</taxon>
        <taxon>Hyphomicrobiales</taxon>
        <taxon>Brucellaceae</taxon>
        <taxon>Brucella/Ochrobactrum group</taxon>
        <taxon>Brucella</taxon>
    </lineage>
</organism>
<protein>
    <recommendedName>
        <fullName>Putative binding protein BruAb2_0484</fullName>
    </recommendedName>
</protein>
<evidence type="ECO:0000255" key="1"/>
<evidence type="ECO:0000305" key="2"/>
<proteinExistence type="inferred from homology"/>
<reference key="1">
    <citation type="journal article" date="2005" name="J. Bacteriol.">
        <title>Completion of the genome sequence of Brucella abortus and comparison to the highly similar genomes of Brucella melitensis and Brucella suis.</title>
        <authorList>
            <person name="Halling S.M."/>
            <person name="Peterson-Burch B.D."/>
            <person name="Bricker B.J."/>
            <person name="Zuerner R.L."/>
            <person name="Qing Z."/>
            <person name="Li L.-L."/>
            <person name="Kapur V."/>
            <person name="Alt D.P."/>
            <person name="Olsen S.C."/>
        </authorList>
    </citation>
    <scope>NUCLEOTIDE SEQUENCE [LARGE SCALE GENOMIC DNA]</scope>
    <source>
        <strain>9-941</strain>
    </source>
</reference>
<name>Y2784_BRUAB</name>
<gene>
    <name type="ordered locus">BruAb2_0484</name>
</gene>
<sequence>MLIRKWKAGLLAGLSILALASSADAGEVRMTVAEYSAKTGPYFEEVKKAFEAENPGITLNFEVVPWDVLLQKLTTDISAGTNADLSIIGTRWLIDFVQQGIAEPLDGYMNDEFKGRFIETFLSPSVLDGKTYGLPIAASARAMYYNKDLFEKAGIKNPPANWDELKADAAKIKALGGENYGFGLQGKEIETDVYYYYAMWSYGTEILNKDGTSGLSTPGALEAAKLYKSMIDDGLTQPGVTSYAREDVQNLFKQGKVGMMITAPFLSNQIKEEAPNLKYGVAAIPAGPTGARGTYGVTDSVIMFQNSKNKEEAWKVLDFLFQKDWRAKFTQNEGFLPVNKEEAKMDYYVNNADLAAFTALLPDARFAPVIPGWEEIADITSNAMQSIYLGKGEPDAVLKDAAAKADAILKK</sequence>